<keyword id="KW-0997">Cell inner membrane</keyword>
<keyword id="KW-1003">Cell membrane</keyword>
<keyword id="KW-0868">Chloride</keyword>
<keyword id="KW-0869">Chloride channel</keyword>
<keyword id="KW-0407">Ion channel</keyword>
<keyword id="KW-0406">Ion transport</keyword>
<keyword id="KW-0472">Membrane</keyword>
<keyword id="KW-1185">Reference proteome</keyword>
<keyword id="KW-0812">Transmembrane</keyword>
<keyword id="KW-1133">Transmembrane helix</keyword>
<keyword id="KW-0813">Transport</keyword>
<keyword id="KW-0851">Voltage-gated channel</keyword>
<comment type="function">
    <text evidence="1">Probably acts as an electrical shunt for an outwardly-directed proton pump that is linked to amino acid decarboxylation, as part of the extreme acid resistance (XAR) response.</text>
</comment>
<comment type="subcellular location">
    <subcellularLocation>
        <location evidence="1">Cell inner membrane</location>
        <topology evidence="1">Multi-pass membrane protein</topology>
    </subcellularLocation>
</comment>
<comment type="similarity">
    <text evidence="1">Belongs to the chloride channel (TC 2.A.49) family. ClcB subfamily.</text>
</comment>
<feature type="chain" id="PRO_1000066131" description="Voltage-gated ClC-type chloride channel ClcB">
    <location>
        <begin position="1"/>
        <end position="418"/>
    </location>
</feature>
<feature type="transmembrane region" description="Helical" evidence="1">
    <location>
        <begin position="5"/>
        <end position="25"/>
    </location>
</feature>
<feature type="transmembrane region" description="Helical" evidence="1">
    <location>
        <begin position="54"/>
        <end position="74"/>
    </location>
</feature>
<feature type="transmembrane region" description="Helical" evidence="1">
    <location>
        <begin position="146"/>
        <end position="166"/>
    </location>
</feature>
<feature type="transmembrane region" description="Helical" evidence="1">
    <location>
        <begin position="168"/>
        <end position="188"/>
    </location>
</feature>
<feature type="transmembrane region" description="Helical" evidence="1">
    <location>
        <begin position="222"/>
        <end position="242"/>
    </location>
</feature>
<feature type="transmembrane region" description="Helical" evidence="1">
    <location>
        <begin position="258"/>
        <end position="278"/>
    </location>
</feature>
<feature type="transmembrane region" description="Helical" evidence="1">
    <location>
        <begin position="291"/>
        <end position="311"/>
    </location>
</feature>
<feature type="transmembrane region" description="Helical" evidence="1">
    <location>
        <begin position="316"/>
        <end position="336"/>
    </location>
</feature>
<feature type="transmembrane region" description="Helical" evidence="1">
    <location>
        <begin position="352"/>
        <end position="372"/>
    </location>
</feature>
<feature type="transmembrane region" description="Helical" evidence="1">
    <location>
        <begin position="380"/>
        <end position="400"/>
    </location>
</feature>
<gene>
    <name evidence="1" type="primary">clcB</name>
    <name type="ordered locus">EcE24377A_1800</name>
</gene>
<dbReference type="EMBL" id="CP000800">
    <property type="protein sequence ID" value="ABV17150.1"/>
    <property type="molecule type" value="Genomic_DNA"/>
</dbReference>
<dbReference type="SMR" id="A7ZM51"/>
<dbReference type="KEGG" id="ecw:EcE24377A_1800"/>
<dbReference type="HOGENOM" id="CLU_015263_5_2_6"/>
<dbReference type="Proteomes" id="UP000001122">
    <property type="component" value="Chromosome"/>
</dbReference>
<dbReference type="GO" id="GO:0034707">
    <property type="term" value="C:chloride channel complex"/>
    <property type="evidence" value="ECO:0007669"/>
    <property type="project" value="UniProtKB-KW"/>
</dbReference>
<dbReference type="GO" id="GO:0005886">
    <property type="term" value="C:plasma membrane"/>
    <property type="evidence" value="ECO:0007669"/>
    <property type="project" value="UniProtKB-SubCell"/>
</dbReference>
<dbReference type="GO" id="GO:0005247">
    <property type="term" value="F:voltage-gated chloride channel activity"/>
    <property type="evidence" value="ECO:0007669"/>
    <property type="project" value="UniProtKB-UniRule"/>
</dbReference>
<dbReference type="GO" id="GO:0010447">
    <property type="term" value="P:response to acidic pH"/>
    <property type="evidence" value="ECO:0007669"/>
    <property type="project" value="InterPro"/>
</dbReference>
<dbReference type="CDD" id="cd00400">
    <property type="entry name" value="Voltage_gated_ClC"/>
    <property type="match status" value="1"/>
</dbReference>
<dbReference type="FunFam" id="1.10.3080.10:FF:000010">
    <property type="entry name" value="Voltage-gated ClC-type chloride channel ClcB"/>
    <property type="match status" value="1"/>
</dbReference>
<dbReference type="Gene3D" id="1.10.3080.10">
    <property type="entry name" value="Clc chloride channel"/>
    <property type="match status" value="1"/>
</dbReference>
<dbReference type="HAMAP" id="MF_01203">
    <property type="entry name" value="CLC_ClcB"/>
    <property type="match status" value="1"/>
</dbReference>
<dbReference type="InterPro" id="IPR014743">
    <property type="entry name" value="Cl-channel_core"/>
</dbReference>
<dbReference type="InterPro" id="IPR023790">
    <property type="entry name" value="Cl-channel_volt-gated_ClcB"/>
</dbReference>
<dbReference type="InterPro" id="IPR001807">
    <property type="entry name" value="ClC"/>
</dbReference>
<dbReference type="InterPro" id="IPR050368">
    <property type="entry name" value="ClC-type_chloride_channel"/>
</dbReference>
<dbReference type="NCBIfam" id="NF002437">
    <property type="entry name" value="PRK01610.1"/>
    <property type="match status" value="1"/>
</dbReference>
<dbReference type="PANTHER" id="PTHR43427">
    <property type="entry name" value="CHLORIDE CHANNEL PROTEIN CLC-E"/>
    <property type="match status" value="1"/>
</dbReference>
<dbReference type="PANTHER" id="PTHR43427:SF6">
    <property type="entry name" value="CHLORIDE CHANNEL PROTEIN CLC-E"/>
    <property type="match status" value="1"/>
</dbReference>
<dbReference type="Pfam" id="PF00654">
    <property type="entry name" value="Voltage_CLC"/>
    <property type="match status" value="1"/>
</dbReference>
<dbReference type="PRINTS" id="PR00762">
    <property type="entry name" value="CLCHANNEL"/>
</dbReference>
<dbReference type="SUPFAM" id="SSF81340">
    <property type="entry name" value="Clc chloride channel"/>
    <property type="match status" value="1"/>
</dbReference>
<proteinExistence type="inferred from homology"/>
<sequence>MFRRLLIATVVGILAAFAVAGFRHAMLLLEWLFLNNDSGSLVNAATNLSPWRRLLTPALGGLAAGLLLMGWQKFTQQRPHAPTDYMEALQTDGQFDYAASLVKSLASLLVVTSGSAIGREGAMILLAALAASCFAQRFTPRQEWKLWIACGAAAGMAAAYRAPLAGSLFIAEVLFGTMMLASLGPVIISAVVALLVSNLINHSDALLYNVQLSVTVQARDYALIISTGVLAGLCGPLLLTLMNACHRGFVSLKLAPPWQLALGGLIVGLLSLFTPAVWGNGYSTVQSFLTAPPLLMIIAGIFLCKLCAVLASSGSGAPGGVFTPTLFIGLAIGMLYGRSLGLWFPDGEEITLLLGLTGMATLLAATTHAPIMSTLMICEMTGEYQLLPGLLIACVIASVISRTLHRDSIYRQHTAQHS</sequence>
<evidence type="ECO:0000255" key="1">
    <source>
        <dbReference type="HAMAP-Rule" id="MF_01203"/>
    </source>
</evidence>
<organism>
    <name type="scientific">Escherichia coli O139:H28 (strain E24377A / ETEC)</name>
    <dbReference type="NCBI Taxonomy" id="331111"/>
    <lineage>
        <taxon>Bacteria</taxon>
        <taxon>Pseudomonadati</taxon>
        <taxon>Pseudomonadota</taxon>
        <taxon>Gammaproteobacteria</taxon>
        <taxon>Enterobacterales</taxon>
        <taxon>Enterobacteriaceae</taxon>
        <taxon>Escherichia</taxon>
    </lineage>
</organism>
<reference key="1">
    <citation type="journal article" date="2008" name="J. Bacteriol.">
        <title>The pangenome structure of Escherichia coli: comparative genomic analysis of E. coli commensal and pathogenic isolates.</title>
        <authorList>
            <person name="Rasko D.A."/>
            <person name="Rosovitz M.J."/>
            <person name="Myers G.S.A."/>
            <person name="Mongodin E.F."/>
            <person name="Fricke W.F."/>
            <person name="Gajer P."/>
            <person name="Crabtree J."/>
            <person name="Sebaihia M."/>
            <person name="Thomson N.R."/>
            <person name="Chaudhuri R."/>
            <person name="Henderson I.R."/>
            <person name="Sperandio V."/>
            <person name="Ravel J."/>
        </authorList>
    </citation>
    <scope>NUCLEOTIDE SEQUENCE [LARGE SCALE GENOMIC DNA]</scope>
    <source>
        <strain>E24377A / ETEC</strain>
    </source>
</reference>
<name>CLCB_ECO24</name>
<protein>
    <recommendedName>
        <fullName evidence="1">Voltage-gated ClC-type chloride channel ClcB</fullName>
    </recommendedName>
</protein>
<accession>A7ZM51</accession>